<sequence length="176" mass="20004">GKAKPRLEIEGYPVEGISIGGHETCVIFPTLSLAFDIGRCPQRAVAQDFLFISHAHLDHIGGLPMYVATRGLYRLRPPTIFVPKYLRELVERLFDVHRAMDQSELNHTLVPLDIGEEYELRRDLKVRAFKTYHTIPSQGYVIYSVKQKLKQDYLGLPGSEIKRLKLSGVEITNTVT</sequence>
<keyword id="KW-0903">Direct protein sequencing</keyword>
<keyword id="KW-0255">Endonuclease</keyword>
<keyword id="KW-0378">Hydrolase</keyword>
<keyword id="KW-0479">Metal-binding</keyword>
<keyword id="KW-0540">Nuclease</keyword>
<keyword id="KW-0539">Nucleus</keyword>
<keyword id="KW-1185">Reference proteome</keyword>
<keyword id="KW-0819">tRNA processing</keyword>
<keyword id="KW-0862">Zinc</keyword>
<gene>
    <name type="primary">ELAC</name>
</gene>
<organism>
    <name type="scientific">Triticum aestivum</name>
    <name type="common">Wheat</name>
    <dbReference type="NCBI Taxonomy" id="4565"/>
    <lineage>
        <taxon>Eukaryota</taxon>
        <taxon>Viridiplantae</taxon>
        <taxon>Streptophyta</taxon>
        <taxon>Embryophyta</taxon>
        <taxon>Tracheophyta</taxon>
        <taxon>Spermatophyta</taxon>
        <taxon>Magnoliopsida</taxon>
        <taxon>Liliopsida</taxon>
        <taxon>Poales</taxon>
        <taxon>Poaceae</taxon>
        <taxon>BOP clade</taxon>
        <taxon>Pooideae</taxon>
        <taxon>Triticodae</taxon>
        <taxon>Triticeae</taxon>
        <taxon>Triticinae</taxon>
        <taxon>Triticum</taxon>
    </lineage>
</organism>
<dbReference type="EC" id="3.1.26.11"/>
<dbReference type="EMBL" id="BE403456">
    <property type="status" value="NOT_ANNOTATED_CDS"/>
    <property type="molecule type" value="mRNA"/>
</dbReference>
<dbReference type="SMR" id="P60193"/>
<dbReference type="STRING" id="4565.P60193"/>
<dbReference type="PaxDb" id="4565-Traes_6DS_8CB5C0B1E.1"/>
<dbReference type="eggNOG" id="ENOG502QVD0">
    <property type="taxonomic scope" value="Eukaryota"/>
</dbReference>
<dbReference type="BRENDA" id="3.1.26.11">
    <property type="organism ID" value="6500"/>
</dbReference>
<dbReference type="Proteomes" id="UP000019116">
    <property type="component" value="Unplaced"/>
</dbReference>
<dbReference type="GO" id="GO:0005634">
    <property type="term" value="C:nucleus"/>
    <property type="evidence" value="ECO:0007669"/>
    <property type="project" value="UniProtKB-SubCell"/>
</dbReference>
<dbReference type="GO" id="GO:0042781">
    <property type="term" value="F:3'-tRNA processing endoribonuclease activity"/>
    <property type="evidence" value="ECO:0007669"/>
    <property type="project" value="UniProtKB-EC"/>
</dbReference>
<dbReference type="GO" id="GO:0046872">
    <property type="term" value="F:metal ion binding"/>
    <property type="evidence" value="ECO:0007669"/>
    <property type="project" value="UniProtKB-KW"/>
</dbReference>
<dbReference type="CDD" id="cd16272">
    <property type="entry name" value="RNaseZ_MBL-fold"/>
    <property type="match status" value="1"/>
</dbReference>
<dbReference type="Gene3D" id="3.60.15.10">
    <property type="entry name" value="Ribonuclease Z/Hydroxyacylglutathione hydrolase-like"/>
    <property type="match status" value="1"/>
</dbReference>
<dbReference type="InterPro" id="IPR001279">
    <property type="entry name" value="Metallo-B-lactamas"/>
</dbReference>
<dbReference type="InterPro" id="IPR036866">
    <property type="entry name" value="RibonucZ/Hydroxyglut_hydro"/>
</dbReference>
<dbReference type="PANTHER" id="PTHR46504">
    <property type="entry name" value="TRNASE Z TRZ1"/>
    <property type="match status" value="1"/>
</dbReference>
<dbReference type="PANTHER" id="PTHR46504:SF2">
    <property type="entry name" value="TRNASE Z TRZ1"/>
    <property type="match status" value="1"/>
</dbReference>
<dbReference type="Pfam" id="PF12706">
    <property type="entry name" value="Lactamase_B_2"/>
    <property type="match status" value="1"/>
</dbReference>
<dbReference type="SUPFAM" id="SSF56281">
    <property type="entry name" value="Metallo-hydrolase/oxidoreductase"/>
    <property type="match status" value="1"/>
</dbReference>
<proteinExistence type="evidence at protein level"/>
<comment type="function">
    <text evidence="1">Zinc phosphodiesterase, which displays some tRNA 3'-processing endonuclease activity. Probably involved in tRNA maturation, by removing a 3'-trailer from precursor tRNA.</text>
</comment>
<comment type="catalytic activity">
    <reaction>
        <text>Endonucleolytic cleavage of RNA, removing extra 3' nucleotides from tRNA precursor, generating 3' termini of tRNAs. A 3'-hydroxy group is left at the tRNA terminus and a 5'-phosphoryl group is left at the trailer molecule.</text>
        <dbReference type="EC" id="3.1.26.11"/>
    </reaction>
</comment>
<comment type="cofactor">
    <cofactor evidence="2">
        <name>Zn(2+)</name>
        <dbReference type="ChEBI" id="CHEBI:29105"/>
    </cofactor>
</comment>
<comment type="subunit">
    <text>Homodimer.</text>
</comment>
<comment type="subcellular location">
    <subcellularLocation>
        <location evidence="2">Nucleus</location>
    </subcellularLocation>
</comment>
<comment type="similarity">
    <text evidence="2">Belongs to the RNase Z family.</text>
</comment>
<evidence type="ECO:0000269" key="1">
    <source>
    </source>
</evidence>
<evidence type="ECO:0000305" key="2"/>
<reference key="1">
    <citation type="submission" date="2000-07" db="EMBL/GenBank/DDBJ databases">
        <title>The structure and function of the expressed portion of the wheat genomes.</title>
        <authorList>
            <person name="Anderson O.D."/>
            <person name="Chao S."/>
            <person name="Choi D.W."/>
            <person name="Close T.J."/>
            <person name="Fenton R.D."/>
            <person name="Han P.S."/>
            <person name="Hsia C.C."/>
            <person name="Kang Y."/>
            <person name="Lazo G.R."/>
            <person name="Miller R."/>
            <person name="Rausch C.J."/>
            <person name="Seaton C.L."/>
            <person name="Tong J.C."/>
        </authorList>
    </citation>
    <scope>NUCLEOTIDE SEQUENCE [MRNA]</scope>
</reference>
<reference key="2">
    <citation type="journal article" date="2002" name="EMBO J.">
        <title>Assigning a function to a conserved group of proteins: the tRNA 3' - processing enzymes.</title>
        <authorList>
            <person name="Schiffer S."/>
            <person name="Roesch S."/>
            <person name="Marchfelder A."/>
        </authorList>
    </citation>
    <scope>PARTIAL PROTEIN SEQUENCE</scope>
    <scope>FUNCTION</scope>
    <scope>HOMODIMERIZATION</scope>
</reference>
<protein>
    <recommendedName>
        <fullName>Nuclear ribonuclease Z</fullName>
        <shortName>RNase Z</shortName>
        <ecNumber>3.1.26.11</ecNumber>
    </recommendedName>
    <alternativeName>
        <fullName>Zinc phosphodiesterase ELAC</fullName>
    </alternativeName>
    <alternativeName>
        <fullName>tRNA 3 endonuclease</fullName>
    </alternativeName>
    <alternativeName>
        <fullName>tRNase Z</fullName>
    </alternativeName>
</protein>
<name>RNZN_WHEAT</name>
<accession>P60193</accession>
<feature type="chain" id="PRO_0000155835" description="Nuclear ribonuclease Z">
    <location>
        <begin position="1" status="less than"/>
        <end position="176" status="greater than"/>
    </location>
</feature>
<feature type="non-terminal residue">
    <location>
        <position position="1"/>
    </location>
</feature>
<feature type="non-terminal residue">
    <location>
        <position position="176"/>
    </location>
</feature>